<protein>
    <recommendedName>
        <fullName evidence="1">Enolase-phosphatase E1</fullName>
        <ecNumber evidence="1">3.1.3.77</ecNumber>
    </recommendedName>
    <alternativeName>
        <fullName evidence="1">2,3-diketo-5-methylthio-1-phosphopentane phosphatase</fullName>
    </alternativeName>
</protein>
<accession>Q17Q32</accession>
<keyword id="KW-0028">Amino-acid biosynthesis</keyword>
<keyword id="KW-0963">Cytoplasm</keyword>
<keyword id="KW-0378">Hydrolase</keyword>
<keyword id="KW-0460">Magnesium</keyword>
<keyword id="KW-0479">Metal-binding</keyword>
<keyword id="KW-0486">Methionine biosynthesis</keyword>
<keyword id="KW-0539">Nucleus</keyword>
<keyword id="KW-1185">Reference proteome</keyword>
<gene>
    <name type="ORF">AAEL000109</name>
</gene>
<name>ENOPH_AEDAE</name>
<organism>
    <name type="scientific">Aedes aegypti</name>
    <name type="common">Yellowfever mosquito</name>
    <name type="synonym">Culex aegypti</name>
    <dbReference type="NCBI Taxonomy" id="7159"/>
    <lineage>
        <taxon>Eukaryota</taxon>
        <taxon>Metazoa</taxon>
        <taxon>Ecdysozoa</taxon>
        <taxon>Arthropoda</taxon>
        <taxon>Hexapoda</taxon>
        <taxon>Insecta</taxon>
        <taxon>Pterygota</taxon>
        <taxon>Neoptera</taxon>
        <taxon>Endopterygota</taxon>
        <taxon>Diptera</taxon>
        <taxon>Nematocera</taxon>
        <taxon>Culicoidea</taxon>
        <taxon>Culicidae</taxon>
        <taxon>Culicinae</taxon>
        <taxon>Aedini</taxon>
        <taxon>Aedes</taxon>
        <taxon>Stegomyia</taxon>
    </lineage>
</organism>
<evidence type="ECO:0000255" key="1">
    <source>
        <dbReference type="HAMAP-Rule" id="MF_03117"/>
    </source>
</evidence>
<evidence type="ECO:0000256" key="2">
    <source>
        <dbReference type="SAM" id="MobiDB-lite"/>
    </source>
</evidence>
<feature type="chain" id="PRO_0000393973" description="Enolase-phosphatase E1">
    <location>
        <begin position="1"/>
        <end position="1107"/>
    </location>
</feature>
<feature type="region of interest" description="Disordered" evidence="2">
    <location>
        <begin position="258"/>
        <end position="1107"/>
    </location>
</feature>
<feature type="compositionally biased region" description="Basic and acidic residues" evidence="2">
    <location>
        <begin position="260"/>
        <end position="289"/>
    </location>
</feature>
<feature type="compositionally biased region" description="Low complexity" evidence="2">
    <location>
        <begin position="291"/>
        <end position="306"/>
    </location>
</feature>
<feature type="compositionally biased region" description="Acidic residues" evidence="2">
    <location>
        <begin position="366"/>
        <end position="376"/>
    </location>
</feature>
<feature type="compositionally biased region" description="Basic and acidic residues" evidence="2">
    <location>
        <begin position="393"/>
        <end position="427"/>
    </location>
</feature>
<feature type="compositionally biased region" description="Basic and acidic residues" evidence="2">
    <location>
        <begin position="435"/>
        <end position="462"/>
    </location>
</feature>
<feature type="compositionally biased region" description="Acidic residues" evidence="2">
    <location>
        <begin position="475"/>
        <end position="485"/>
    </location>
</feature>
<feature type="compositionally biased region" description="Basic and acidic residues" evidence="2">
    <location>
        <begin position="486"/>
        <end position="512"/>
    </location>
</feature>
<feature type="compositionally biased region" description="Basic and acidic residues" evidence="2">
    <location>
        <begin position="534"/>
        <end position="548"/>
    </location>
</feature>
<feature type="compositionally biased region" description="Basic and acidic residues" evidence="2">
    <location>
        <begin position="572"/>
        <end position="586"/>
    </location>
</feature>
<feature type="compositionally biased region" description="Basic and acidic residues" evidence="2">
    <location>
        <begin position="593"/>
        <end position="604"/>
    </location>
</feature>
<feature type="compositionally biased region" description="Basic and acidic residues" evidence="2">
    <location>
        <begin position="610"/>
        <end position="686"/>
    </location>
</feature>
<feature type="compositionally biased region" description="Basic and acidic residues" evidence="2">
    <location>
        <begin position="693"/>
        <end position="776"/>
    </location>
</feature>
<feature type="compositionally biased region" description="Low complexity" evidence="2">
    <location>
        <begin position="794"/>
        <end position="803"/>
    </location>
</feature>
<feature type="compositionally biased region" description="Basic and acidic residues" evidence="2">
    <location>
        <begin position="804"/>
        <end position="838"/>
    </location>
</feature>
<feature type="compositionally biased region" description="Basic and acidic residues" evidence="2">
    <location>
        <begin position="849"/>
        <end position="908"/>
    </location>
</feature>
<feature type="compositionally biased region" description="Low complexity" evidence="2">
    <location>
        <begin position="909"/>
        <end position="919"/>
    </location>
</feature>
<feature type="compositionally biased region" description="Acidic residues" evidence="2">
    <location>
        <begin position="920"/>
        <end position="935"/>
    </location>
</feature>
<feature type="compositionally biased region" description="Basic and acidic residues" evidence="2">
    <location>
        <begin position="937"/>
        <end position="957"/>
    </location>
</feature>
<feature type="compositionally biased region" description="Basic and acidic residues" evidence="2">
    <location>
        <begin position="1001"/>
        <end position="1028"/>
    </location>
</feature>
<feature type="compositionally biased region" description="Basic and acidic residues" evidence="2">
    <location>
        <begin position="1035"/>
        <end position="1047"/>
    </location>
</feature>
<feature type="compositionally biased region" description="Low complexity" evidence="2">
    <location>
        <begin position="1048"/>
        <end position="1083"/>
    </location>
</feature>
<feature type="binding site" evidence="1">
    <location>
        <position position="19"/>
    </location>
    <ligand>
        <name>Mg(2+)</name>
        <dbReference type="ChEBI" id="CHEBI:18420"/>
    </ligand>
</feature>
<feature type="binding site" evidence="1">
    <location>
        <position position="21"/>
    </location>
    <ligand>
        <name>Mg(2+)</name>
        <dbReference type="ChEBI" id="CHEBI:18420"/>
    </ligand>
</feature>
<feature type="binding site" evidence="1">
    <location>
        <begin position="152"/>
        <end position="153"/>
    </location>
    <ligand>
        <name>substrate</name>
    </ligand>
</feature>
<feature type="binding site" evidence="1">
    <location>
        <position position="186"/>
    </location>
    <ligand>
        <name>substrate</name>
    </ligand>
</feature>
<feature type="binding site" evidence="1">
    <location>
        <position position="211"/>
    </location>
    <ligand>
        <name>Mg(2+)</name>
        <dbReference type="ChEBI" id="CHEBI:18420"/>
    </ligand>
</feature>
<reference key="1">
    <citation type="journal article" date="2007" name="Science">
        <title>Genome sequence of Aedes aegypti, a major arbovirus vector.</title>
        <authorList>
            <person name="Nene V."/>
            <person name="Wortman J.R."/>
            <person name="Lawson D."/>
            <person name="Haas B.J."/>
            <person name="Kodira C.D."/>
            <person name="Tu Z.J."/>
            <person name="Loftus B.J."/>
            <person name="Xi Z."/>
            <person name="Megy K."/>
            <person name="Grabherr M."/>
            <person name="Ren Q."/>
            <person name="Zdobnov E.M."/>
            <person name="Lobo N.F."/>
            <person name="Campbell K.S."/>
            <person name="Brown S.E."/>
            <person name="Bonaldo M.F."/>
            <person name="Zhu J."/>
            <person name="Sinkins S.P."/>
            <person name="Hogenkamp D.G."/>
            <person name="Amedeo P."/>
            <person name="Arensburger P."/>
            <person name="Atkinson P.W."/>
            <person name="Bidwell S.L."/>
            <person name="Biedler J."/>
            <person name="Birney E."/>
            <person name="Bruggner R.V."/>
            <person name="Costas J."/>
            <person name="Coy M.R."/>
            <person name="Crabtree J."/>
            <person name="Crawford M."/>
            <person name="DeBruyn B."/>
            <person name="DeCaprio D."/>
            <person name="Eiglmeier K."/>
            <person name="Eisenstadt E."/>
            <person name="El-Dorry H."/>
            <person name="Gelbart W.M."/>
            <person name="Gomes S.L."/>
            <person name="Hammond M."/>
            <person name="Hannick L.I."/>
            <person name="Hogan J.R."/>
            <person name="Holmes M.H."/>
            <person name="Jaffe D."/>
            <person name="Johnston S.J."/>
            <person name="Kennedy R.C."/>
            <person name="Koo H."/>
            <person name="Kravitz S."/>
            <person name="Kriventseva E.V."/>
            <person name="Kulp D."/>
            <person name="Labutti K."/>
            <person name="Lee E."/>
            <person name="Li S."/>
            <person name="Lovin D.D."/>
            <person name="Mao C."/>
            <person name="Mauceli E."/>
            <person name="Menck C.F."/>
            <person name="Miller J.R."/>
            <person name="Montgomery P."/>
            <person name="Mori A."/>
            <person name="Nascimento A.L."/>
            <person name="Naveira H.F."/>
            <person name="Nusbaum C."/>
            <person name="O'Leary S.B."/>
            <person name="Orvis J."/>
            <person name="Pertea M."/>
            <person name="Quesneville H."/>
            <person name="Reidenbach K.R."/>
            <person name="Rogers Y.-H.C."/>
            <person name="Roth C.W."/>
            <person name="Schneider J.R."/>
            <person name="Schatz M."/>
            <person name="Shumway M."/>
            <person name="Stanke M."/>
            <person name="Stinson E.O."/>
            <person name="Tubio J.M.C."/>
            <person name="Vanzee J.P."/>
            <person name="Verjovski-Almeida S."/>
            <person name="Werner D."/>
            <person name="White O.R."/>
            <person name="Wyder S."/>
            <person name="Zeng Q."/>
            <person name="Zhao Q."/>
            <person name="Zhao Y."/>
            <person name="Hill C.A."/>
            <person name="Raikhel A.S."/>
            <person name="Soares M.B."/>
            <person name="Knudson D.L."/>
            <person name="Lee N.H."/>
            <person name="Galagan J."/>
            <person name="Salzberg S.L."/>
            <person name="Paulsen I.T."/>
            <person name="Dimopoulos G."/>
            <person name="Collins F.H."/>
            <person name="Bruce B."/>
            <person name="Fraser-Liggett C.M."/>
            <person name="Severson D.W."/>
        </authorList>
    </citation>
    <scope>NUCLEOTIDE SEQUENCE [LARGE SCALE GENOMIC DNA]</scope>
    <source>
        <strain>LVPib12</strain>
    </source>
</reference>
<dbReference type="EC" id="3.1.3.77" evidence="1"/>
<dbReference type="EMBL" id="CH477187">
    <property type="protein sequence ID" value="EAT48884.1"/>
    <property type="molecule type" value="Genomic_DNA"/>
</dbReference>
<dbReference type="RefSeq" id="XP_001657693.1">
    <property type="nucleotide sequence ID" value="XM_001657643.1"/>
</dbReference>
<dbReference type="SMR" id="Q17Q32"/>
<dbReference type="STRING" id="7159.Q17Q32"/>
<dbReference type="PaxDb" id="7159-AAEL000109-PA"/>
<dbReference type="KEGG" id="aag:5567790"/>
<dbReference type="VEuPathDB" id="VectorBase:AAEL000109"/>
<dbReference type="eggNOG" id="KOG2630">
    <property type="taxonomic scope" value="Eukaryota"/>
</dbReference>
<dbReference type="HOGENOM" id="CLU_282319_0_0_1"/>
<dbReference type="InParanoid" id="Q17Q32"/>
<dbReference type="OMA" id="VESHQHE"/>
<dbReference type="OrthoDB" id="272500at2759"/>
<dbReference type="UniPathway" id="UPA00904">
    <property type="reaction ID" value="UER00876"/>
</dbReference>
<dbReference type="UniPathway" id="UPA00904">
    <property type="reaction ID" value="UER00877"/>
</dbReference>
<dbReference type="Proteomes" id="UP000008820">
    <property type="component" value="Unassembled WGS sequence"/>
</dbReference>
<dbReference type="Proteomes" id="UP000682892">
    <property type="component" value="Chromosome 2"/>
</dbReference>
<dbReference type="GO" id="GO:0005737">
    <property type="term" value="C:cytoplasm"/>
    <property type="evidence" value="ECO:0007669"/>
    <property type="project" value="UniProtKB-SubCell"/>
</dbReference>
<dbReference type="GO" id="GO:0005634">
    <property type="term" value="C:nucleus"/>
    <property type="evidence" value="ECO:0007669"/>
    <property type="project" value="UniProtKB-SubCell"/>
</dbReference>
<dbReference type="GO" id="GO:0043874">
    <property type="term" value="F:acireductone synthase activity"/>
    <property type="evidence" value="ECO:0007669"/>
    <property type="project" value="UniProtKB-EC"/>
</dbReference>
<dbReference type="GO" id="GO:0000287">
    <property type="term" value="F:magnesium ion binding"/>
    <property type="evidence" value="ECO:0007669"/>
    <property type="project" value="UniProtKB-UniRule"/>
</dbReference>
<dbReference type="GO" id="GO:0019509">
    <property type="term" value="P:L-methionine salvage from methylthioadenosine"/>
    <property type="evidence" value="ECO:0007669"/>
    <property type="project" value="UniProtKB-UniRule"/>
</dbReference>
<dbReference type="CDD" id="cd01629">
    <property type="entry name" value="HAD_EP"/>
    <property type="match status" value="1"/>
</dbReference>
<dbReference type="FunFam" id="3.40.50.1000:FF:000079">
    <property type="entry name" value="Enolase-phosphatase E1"/>
    <property type="match status" value="1"/>
</dbReference>
<dbReference type="Gene3D" id="1.10.720.60">
    <property type="match status" value="1"/>
</dbReference>
<dbReference type="Gene3D" id="3.40.50.1000">
    <property type="entry name" value="HAD superfamily/HAD-like"/>
    <property type="match status" value="1"/>
</dbReference>
<dbReference type="HAMAP" id="MF_01681">
    <property type="entry name" value="Salvage_MtnC"/>
    <property type="match status" value="1"/>
</dbReference>
<dbReference type="HAMAP" id="MF_03117">
    <property type="entry name" value="Salvage_MtnC_euk"/>
    <property type="match status" value="1"/>
</dbReference>
<dbReference type="InterPro" id="IPR023943">
    <property type="entry name" value="Enolase-ppase_E1"/>
</dbReference>
<dbReference type="InterPro" id="IPR027511">
    <property type="entry name" value="ENOPH1_eukaryotes"/>
</dbReference>
<dbReference type="InterPro" id="IPR036412">
    <property type="entry name" value="HAD-like_sf"/>
</dbReference>
<dbReference type="InterPro" id="IPR006439">
    <property type="entry name" value="HAD-SF_hydro_IA"/>
</dbReference>
<dbReference type="InterPro" id="IPR023214">
    <property type="entry name" value="HAD_sf"/>
</dbReference>
<dbReference type="NCBIfam" id="TIGR01691">
    <property type="entry name" value="enolase-ppase"/>
    <property type="match status" value="1"/>
</dbReference>
<dbReference type="NCBIfam" id="TIGR01549">
    <property type="entry name" value="HAD-SF-IA-v1"/>
    <property type="match status" value="1"/>
</dbReference>
<dbReference type="PANTHER" id="PTHR20371">
    <property type="entry name" value="ENOLASE-PHOSPHATASE E1"/>
    <property type="match status" value="1"/>
</dbReference>
<dbReference type="PANTHER" id="PTHR20371:SF1">
    <property type="entry name" value="ENOLASE-PHOSPHATASE E1"/>
    <property type="match status" value="1"/>
</dbReference>
<dbReference type="Pfam" id="PF00702">
    <property type="entry name" value="Hydrolase"/>
    <property type="match status" value="1"/>
</dbReference>
<dbReference type="SFLD" id="SFLDG01133">
    <property type="entry name" value="C1.5.4:_Enolase-phosphatase_Li"/>
    <property type="match status" value="1"/>
</dbReference>
<dbReference type="SFLD" id="SFLDF00044">
    <property type="entry name" value="enolase-phosphatase"/>
    <property type="match status" value="1"/>
</dbReference>
<dbReference type="SUPFAM" id="SSF56784">
    <property type="entry name" value="HAD-like"/>
    <property type="match status" value="1"/>
</dbReference>
<proteinExistence type="inferred from homology"/>
<comment type="function">
    <text evidence="1">Bifunctional enzyme that catalyzes the enolization of 2,3-diketo-5-methylthiopentyl-1-phosphate (DK-MTP-1-P) into the intermediate 2-hydroxy-3-keto-5-methylthiopentenyl-1-phosphate (HK-MTPenyl-1-P), which is then dephosphorylated to form the acireductone 1,2-dihydroxy-3-keto-5-methylthiopentene (DHK-MTPene).</text>
</comment>
<comment type="catalytic activity">
    <reaction evidence="1">
        <text>5-methylsulfanyl-2,3-dioxopentyl phosphate + H2O = 1,2-dihydroxy-5-(methylsulfanyl)pent-1-en-3-one + phosphate</text>
        <dbReference type="Rhea" id="RHEA:21700"/>
        <dbReference type="ChEBI" id="CHEBI:15377"/>
        <dbReference type="ChEBI" id="CHEBI:43474"/>
        <dbReference type="ChEBI" id="CHEBI:49252"/>
        <dbReference type="ChEBI" id="CHEBI:58828"/>
        <dbReference type="EC" id="3.1.3.77"/>
    </reaction>
</comment>
<comment type="cofactor">
    <cofactor evidence="1">
        <name>Mg(2+)</name>
        <dbReference type="ChEBI" id="CHEBI:18420"/>
    </cofactor>
    <text evidence="1">Binds 1 Mg(2+) ion per subunit.</text>
</comment>
<comment type="pathway">
    <text evidence="1">Amino-acid biosynthesis; L-methionine biosynthesis via salvage pathway; L-methionine from S-methyl-5-thio-alpha-D-ribose 1-phosphate: step 3/6.</text>
</comment>
<comment type="pathway">
    <text evidence="1">Amino-acid biosynthesis; L-methionine biosynthesis via salvage pathway; L-methionine from S-methyl-5-thio-alpha-D-ribose 1-phosphate: step 4/6.</text>
</comment>
<comment type="subunit">
    <text evidence="1">Monomer.</text>
</comment>
<comment type="subcellular location">
    <subcellularLocation>
        <location evidence="1">Cytoplasm</location>
    </subcellularLocation>
    <subcellularLocation>
        <location evidence="1">Nucleus</location>
    </subcellularLocation>
</comment>
<comment type="similarity">
    <text evidence="1">Belongs to the HAD-like hydrolase superfamily. MasA/MtnC family.</text>
</comment>
<sequence length="1107" mass="120606">MAAVSFDEKVLAAKKIICDIEGTTSSISFVKDVLFPYALKHVEEYLKNHWSEDATKTVVAALREQADEDKKAEVEGVVTIPAGDSEDIIPDVVKNVEWQMSQDRKTGALKTLQGLVWAKGYKDGTIKGHVYEDVKKALEQWNESGRKVYIYSSGSVDAQKLLFEHSEQGDLIKYVAGYYDTKIGAKQEKNSYEAILKNIEATGEEALFLTDVVAEAKAAKDAGLNVVVLDRPGNAELSEEDRKEFTVISSFTDLPIESVKSTETENGAEKETVTESTEKVADESEKETETETAAAETENGAEAENGASKRKIDETAQDDEAQRPSKVVKVDQNGDSPAVDGAKQNGDSAEEPATLSETNGKSTGEDAMDVDAEMTDVESSSTTKAAEAGTGKVTEKTETEESPKEKETEMEAEAEVSKTDEKEDTKQQGESVTDGEDKKGDVINKNAEDDIKVEEEKNKEEESAPPTKKAKIEEDKMDVDEEDSAVIEKKADNVDEKPVESTTDEVAKKEENLVETPVDTAKPEVTTSEIAVTDETKEAPSDAAKEESVTSTSKTEEEKSDDLVPTTTSEQTVEKSSAEKTESKSEEETDSGTSEKKVEDKSANNEEEQKEPKESVVAEKKEEEIKVKTADEETKSMETDEVTVEKSNTKEVKDDNEQIPDSKADQDFNAKEAAKETVSEELEVKADAIVPADESKPKAQNDETKEKVTKAEEVTKTAETKTEEEEAKKTEEDAKKTEEDAKKTEKEVKKTDEEMPTEEIKMKDEPTVPEKSKSVDEPMATEESVATKEETLAEETSATTEAQATKEDEKPVDTKTNENDKTTPEVKATEEKTDDAKSTEVATATEEDKEMKEANSAEESVETKEKKTEETHTTDEDKPKESDVAKPDVVEKQEEKMETSEQVDETKGVEATTAGPVEEVAVEATEEDVAMEAESSDAVKEETKTEEPKSKVDKLDSEAMEVDSASTSQNEAKNESVKPAETAAVEESKTESDVVSTTSTDEVKENGTSEKVNTKEESRVPENGEADSKVTTNGNHDEKADSDKENDTSASNIEEASSATTTTTNGTSTESDSSSTTPSSETVAEIKSKKATDAVADSATPSVETES</sequence>